<evidence type="ECO:0000255" key="1">
    <source>
        <dbReference type="HAMAP-Rule" id="MF_01726"/>
    </source>
</evidence>
<keyword id="KW-0067">ATP-binding</keyword>
<keyword id="KW-1003">Cell membrane</keyword>
<keyword id="KW-0472">Membrane</keyword>
<keyword id="KW-0547">Nucleotide-binding</keyword>
<keyword id="KW-1278">Translocase</keyword>
<keyword id="KW-0813">Transport</keyword>
<name>POTA_LACDB</name>
<organism>
    <name type="scientific">Lactobacillus delbrueckii subsp. bulgaricus (strain ATCC BAA-365 / Lb-18)</name>
    <dbReference type="NCBI Taxonomy" id="321956"/>
    <lineage>
        <taxon>Bacteria</taxon>
        <taxon>Bacillati</taxon>
        <taxon>Bacillota</taxon>
        <taxon>Bacilli</taxon>
        <taxon>Lactobacillales</taxon>
        <taxon>Lactobacillaceae</taxon>
        <taxon>Lactobacillus</taxon>
    </lineage>
</organism>
<dbReference type="EC" id="7.6.2.11" evidence="1"/>
<dbReference type="EMBL" id="CP000412">
    <property type="protein sequence ID" value="ABJ58210.1"/>
    <property type="molecule type" value="Genomic_DNA"/>
</dbReference>
<dbReference type="RefSeq" id="WP_011678091.1">
    <property type="nucleotide sequence ID" value="NC_008529.1"/>
</dbReference>
<dbReference type="SMR" id="Q04BG2"/>
<dbReference type="KEGG" id="lbu:LBUL_0578"/>
<dbReference type="HOGENOM" id="CLU_000604_1_1_9"/>
<dbReference type="BioCyc" id="LDEL321956:LBUL_RS02750-MONOMER"/>
<dbReference type="GO" id="GO:0043190">
    <property type="term" value="C:ATP-binding cassette (ABC) transporter complex"/>
    <property type="evidence" value="ECO:0007669"/>
    <property type="project" value="InterPro"/>
</dbReference>
<dbReference type="GO" id="GO:0015594">
    <property type="term" value="F:ABC-type putrescine transporter activity"/>
    <property type="evidence" value="ECO:0007669"/>
    <property type="project" value="InterPro"/>
</dbReference>
<dbReference type="GO" id="GO:0005524">
    <property type="term" value="F:ATP binding"/>
    <property type="evidence" value="ECO:0007669"/>
    <property type="project" value="UniProtKB-KW"/>
</dbReference>
<dbReference type="GO" id="GO:0016887">
    <property type="term" value="F:ATP hydrolysis activity"/>
    <property type="evidence" value="ECO:0007669"/>
    <property type="project" value="InterPro"/>
</dbReference>
<dbReference type="CDD" id="cd03300">
    <property type="entry name" value="ABC_PotA_N"/>
    <property type="match status" value="1"/>
</dbReference>
<dbReference type="FunFam" id="3.40.50.300:FF:000133">
    <property type="entry name" value="Spermidine/putrescine import ATP-binding protein PotA"/>
    <property type="match status" value="1"/>
</dbReference>
<dbReference type="Gene3D" id="2.40.50.100">
    <property type="match status" value="1"/>
</dbReference>
<dbReference type="Gene3D" id="3.40.50.300">
    <property type="entry name" value="P-loop containing nucleotide triphosphate hydrolases"/>
    <property type="match status" value="1"/>
</dbReference>
<dbReference type="InterPro" id="IPR003593">
    <property type="entry name" value="AAA+_ATPase"/>
</dbReference>
<dbReference type="InterPro" id="IPR050093">
    <property type="entry name" value="ABC_SmlMolc_Importer"/>
</dbReference>
<dbReference type="InterPro" id="IPR003439">
    <property type="entry name" value="ABC_transporter-like_ATP-bd"/>
</dbReference>
<dbReference type="InterPro" id="IPR017871">
    <property type="entry name" value="ABC_transporter-like_CS"/>
</dbReference>
<dbReference type="InterPro" id="IPR008995">
    <property type="entry name" value="Mo/tungstate-bd_C_term_dom"/>
</dbReference>
<dbReference type="InterPro" id="IPR027417">
    <property type="entry name" value="P-loop_NTPase"/>
</dbReference>
<dbReference type="InterPro" id="IPR005893">
    <property type="entry name" value="PotA-like"/>
</dbReference>
<dbReference type="InterPro" id="IPR017879">
    <property type="entry name" value="PotA_ATP-bd"/>
</dbReference>
<dbReference type="InterPro" id="IPR013611">
    <property type="entry name" value="Transp-assoc_OB_typ2"/>
</dbReference>
<dbReference type="NCBIfam" id="TIGR01187">
    <property type="entry name" value="potA"/>
    <property type="match status" value="1"/>
</dbReference>
<dbReference type="PANTHER" id="PTHR42781">
    <property type="entry name" value="SPERMIDINE/PUTRESCINE IMPORT ATP-BINDING PROTEIN POTA"/>
    <property type="match status" value="1"/>
</dbReference>
<dbReference type="PANTHER" id="PTHR42781:SF4">
    <property type="entry name" value="SPERMIDINE_PUTRESCINE IMPORT ATP-BINDING PROTEIN POTA"/>
    <property type="match status" value="1"/>
</dbReference>
<dbReference type="Pfam" id="PF00005">
    <property type="entry name" value="ABC_tran"/>
    <property type="match status" value="1"/>
</dbReference>
<dbReference type="Pfam" id="PF08402">
    <property type="entry name" value="TOBE_2"/>
    <property type="match status" value="1"/>
</dbReference>
<dbReference type="SMART" id="SM00382">
    <property type="entry name" value="AAA"/>
    <property type="match status" value="1"/>
</dbReference>
<dbReference type="SUPFAM" id="SSF50331">
    <property type="entry name" value="MOP-like"/>
    <property type="match status" value="1"/>
</dbReference>
<dbReference type="SUPFAM" id="SSF52540">
    <property type="entry name" value="P-loop containing nucleoside triphosphate hydrolases"/>
    <property type="match status" value="1"/>
</dbReference>
<dbReference type="PROSITE" id="PS00211">
    <property type="entry name" value="ABC_TRANSPORTER_1"/>
    <property type="match status" value="1"/>
</dbReference>
<dbReference type="PROSITE" id="PS50893">
    <property type="entry name" value="ABC_TRANSPORTER_2"/>
    <property type="match status" value="1"/>
</dbReference>
<dbReference type="PROSITE" id="PS51305">
    <property type="entry name" value="POTA"/>
    <property type="match status" value="1"/>
</dbReference>
<sequence length="362" mass="40681">MEIIKLDHITKQYDDGFVALKDINLELESGKFYSLLGPSGSGKTTILRIIAGFTEASAGKVYFDGQDITNLDASKRHINTVFQNYALFPHLNVYENVAFALKLRQRPESEIREKVKDALHTVRLDGYANREIFELSGGQQQRVAIARAIINEPKVLLLDECLSALDKRLRKEMQFELRAIQKKLGITFIFVTHDQEEALAMSDEIFVLNDGEIKQSGSPVDIYDEPVNDFVARFIGDSNILSGRMIRDFAVEFAGKDFECADAGITPGEKVEVVLRPEDLDITTPAAGKLLVTVQSQLFLGDHFEIKAIGQDGFEWLIHSTNGVQIGQEVGIFFDPEDIHVMRLGETEEEFDARLETYEGED</sequence>
<feature type="chain" id="PRO_0000286230" description="Spermidine/putrescine import ATP-binding protein PotA">
    <location>
        <begin position="1"/>
        <end position="362"/>
    </location>
</feature>
<feature type="domain" description="ABC transporter" evidence="1">
    <location>
        <begin position="4"/>
        <end position="235"/>
    </location>
</feature>
<feature type="binding site" evidence="1">
    <location>
        <begin position="37"/>
        <end position="44"/>
    </location>
    <ligand>
        <name>ATP</name>
        <dbReference type="ChEBI" id="CHEBI:30616"/>
    </ligand>
</feature>
<comment type="function">
    <text evidence="1">Part of the ABC transporter complex PotABCD involved in spermidine/putrescine import. Responsible for energy coupling to the transport system.</text>
</comment>
<comment type="catalytic activity">
    <reaction evidence="1">
        <text>ATP + H2O + polyamine-[polyamine-binding protein]Side 1 = ADP + phosphate + polyamineSide 2 + [polyamine-binding protein]Side 1.</text>
        <dbReference type="EC" id="7.6.2.11"/>
    </reaction>
</comment>
<comment type="subunit">
    <text evidence="1">The complex is composed of two ATP-binding proteins (PotA), two transmembrane proteins (PotB and PotC) and a solute-binding protein (PotD).</text>
</comment>
<comment type="subcellular location">
    <subcellularLocation>
        <location evidence="1">Cell membrane</location>
        <topology evidence="1">Peripheral membrane protein</topology>
    </subcellularLocation>
</comment>
<comment type="similarity">
    <text evidence="1">Belongs to the ABC transporter superfamily. Spermidine/putrescine importer (TC 3.A.1.11.1) family.</text>
</comment>
<reference key="1">
    <citation type="journal article" date="2006" name="Proc. Natl. Acad. Sci. U.S.A.">
        <title>Comparative genomics of the lactic acid bacteria.</title>
        <authorList>
            <person name="Makarova K.S."/>
            <person name="Slesarev A."/>
            <person name="Wolf Y.I."/>
            <person name="Sorokin A."/>
            <person name="Mirkin B."/>
            <person name="Koonin E.V."/>
            <person name="Pavlov A."/>
            <person name="Pavlova N."/>
            <person name="Karamychev V."/>
            <person name="Polouchine N."/>
            <person name="Shakhova V."/>
            <person name="Grigoriev I."/>
            <person name="Lou Y."/>
            <person name="Rohksar D."/>
            <person name="Lucas S."/>
            <person name="Huang K."/>
            <person name="Goodstein D.M."/>
            <person name="Hawkins T."/>
            <person name="Plengvidhya V."/>
            <person name="Welker D."/>
            <person name="Hughes J."/>
            <person name="Goh Y."/>
            <person name="Benson A."/>
            <person name="Baldwin K."/>
            <person name="Lee J.-H."/>
            <person name="Diaz-Muniz I."/>
            <person name="Dosti B."/>
            <person name="Smeianov V."/>
            <person name="Wechter W."/>
            <person name="Barabote R."/>
            <person name="Lorca G."/>
            <person name="Altermann E."/>
            <person name="Barrangou R."/>
            <person name="Ganesan B."/>
            <person name="Xie Y."/>
            <person name="Rawsthorne H."/>
            <person name="Tamir D."/>
            <person name="Parker C."/>
            <person name="Breidt F."/>
            <person name="Broadbent J.R."/>
            <person name="Hutkins R."/>
            <person name="O'Sullivan D."/>
            <person name="Steele J."/>
            <person name="Unlu G."/>
            <person name="Saier M.H. Jr."/>
            <person name="Klaenhammer T."/>
            <person name="Richardson P."/>
            <person name="Kozyavkin S."/>
            <person name="Weimer B.C."/>
            <person name="Mills D.A."/>
        </authorList>
    </citation>
    <scope>NUCLEOTIDE SEQUENCE [LARGE SCALE GENOMIC DNA]</scope>
    <source>
        <strain>ATCC BAA-365 / Lb-18</strain>
    </source>
</reference>
<protein>
    <recommendedName>
        <fullName evidence="1">Spermidine/putrescine import ATP-binding protein PotA</fullName>
        <ecNumber evidence="1">7.6.2.11</ecNumber>
    </recommendedName>
</protein>
<accession>Q04BG2</accession>
<proteinExistence type="inferred from homology"/>
<gene>
    <name evidence="1" type="primary">potA</name>
    <name type="ordered locus">LBUL_0578</name>
</gene>